<sequence length="86" mass="9883">MKNLIAELLLKLAQKEEESKELVAQVEALEIIVTAMLRNMAQNEQEMLIRQVEGALEGVKPDASVPDHDTELLRQYVKKLLRHPRH</sequence>
<keyword id="KW-0175">Coiled coil</keyword>
<keyword id="KW-0963">Cytoplasm</keyword>
<keyword id="KW-0346">Stress response</keyword>
<proteinExistence type="inferred from homology"/>
<name>IRAP_SALNS</name>
<feature type="chain" id="PRO_1000138493" description="Anti-adapter protein IraP">
    <location>
        <begin position="1"/>
        <end position="86"/>
    </location>
</feature>
<feature type="coiled-coil region" evidence="1">
    <location>
        <begin position="1"/>
        <end position="36"/>
    </location>
</feature>
<organism>
    <name type="scientific">Salmonella newport (strain SL254)</name>
    <dbReference type="NCBI Taxonomy" id="423368"/>
    <lineage>
        <taxon>Bacteria</taxon>
        <taxon>Pseudomonadati</taxon>
        <taxon>Pseudomonadota</taxon>
        <taxon>Gammaproteobacteria</taxon>
        <taxon>Enterobacterales</taxon>
        <taxon>Enterobacteriaceae</taxon>
        <taxon>Salmonella</taxon>
    </lineage>
</organism>
<comment type="function">
    <text evidence="1">Inhibits RpoS proteolysis by regulating RssB activity, thereby increasing the stability of the sigma stress factor RpoS especially during phosphate and magnesium starvation, but also in stationary phase and during nitrogen starvation. Its effect on RpoS stability is due to its interaction with RssB, which probably blocks the interaction of RssB with RpoS, and the consequent delivery of the RssB-RpoS complex to the ClpXP protein degradation pathway.</text>
</comment>
<comment type="subunit">
    <text evidence="1">Interacts with RssB.</text>
</comment>
<comment type="subcellular location">
    <subcellularLocation>
        <location evidence="1">Cytoplasm</location>
    </subcellularLocation>
</comment>
<comment type="similarity">
    <text evidence="1">Belongs to the IraP family.</text>
</comment>
<gene>
    <name evidence="1" type="primary">iraP</name>
    <name type="ordered locus">SNSL254_A0425</name>
</gene>
<reference key="1">
    <citation type="journal article" date="2011" name="J. Bacteriol.">
        <title>Comparative genomics of 28 Salmonella enterica isolates: evidence for CRISPR-mediated adaptive sublineage evolution.</title>
        <authorList>
            <person name="Fricke W.F."/>
            <person name="Mammel M.K."/>
            <person name="McDermott P.F."/>
            <person name="Tartera C."/>
            <person name="White D.G."/>
            <person name="Leclerc J.E."/>
            <person name="Ravel J."/>
            <person name="Cebula T.A."/>
        </authorList>
    </citation>
    <scope>NUCLEOTIDE SEQUENCE [LARGE SCALE GENOMIC DNA]</scope>
    <source>
        <strain>SL254</strain>
    </source>
</reference>
<protein>
    <recommendedName>
        <fullName evidence="1">Anti-adapter protein IraP</fullName>
    </recommendedName>
</protein>
<dbReference type="EMBL" id="CP001113">
    <property type="protein sequence ID" value="ACF63971.1"/>
    <property type="molecule type" value="Genomic_DNA"/>
</dbReference>
<dbReference type="RefSeq" id="WP_001518423.1">
    <property type="nucleotide sequence ID" value="NZ_CCMR01000003.1"/>
</dbReference>
<dbReference type="SMR" id="B4SW22"/>
<dbReference type="KEGG" id="see:SNSL254_A0425"/>
<dbReference type="HOGENOM" id="CLU_169517_0_0_6"/>
<dbReference type="Proteomes" id="UP000008824">
    <property type="component" value="Chromosome"/>
</dbReference>
<dbReference type="GO" id="GO:0005737">
    <property type="term" value="C:cytoplasm"/>
    <property type="evidence" value="ECO:0007669"/>
    <property type="project" value="UniProtKB-SubCell"/>
</dbReference>
<dbReference type="GO" id="GO:0009267">
    <property type="term" value="P:cellular response to starvation"/>
    <property type="evidence" value="ECO:0007669"/>
    <property type="project" value="UniProtKB-UniRule"/>
</dbReference>
<dbReference type="HAMAP" id="MF_01198">
    <property type="entry name" value="Anti_adapt_IraP"/>
    <property type="match status" value="1"/>
</dbReference>
<dbReference type="InterPro" id="IPR019732">
    <property type="entry name" value="SigmaS_Anti-adapt_IraP"/>
</dbReference>
<dbReference type="NCBIfam" id="NF007598">
    <property type="entry name" value="PRK10244.1"/>
    <property type="match status" value="1"/>
</dbReference>
<dbReference type="Pfam" id="PF10796">
    <property type="entry name" value="Anti-adapt_IraP"/>
    <property type="match status" value="1"/>
</dbReference>
<evidence type="ECO:0000255" key="1">
    <source>
        <dbReference type="HAMAP-Rule" id="MF_01198"/>
    </source>
</evidence>
<accession>B4SW22</accession>